<accession>B1LJH6</accession>
<dbReference type="EMBL" id="CP000970">
    <property type="protein sequence ID" value="ACB16606.1"/>
    <property type="molecule type" value="Genomic_DNA"/>
</dbReference>
<dbReference type="RefSeq" id="WP_001138904.1">
    <property type="nucleotide sequence ID" value="NC_010498.1"/>
</dbReference>
<dbReference type="BMRB" id="B1LJH6"/>
<dbReference type="SMR" id="B1LJH6"/>
<dbReference type="GeneID" id="93777034"/>
<dbReference type="KEGG" id="ecm:EcSMS35_0462"/>
<dbReference type="HOGENOM" id="CLU_099839_1_0_6"/>
<dbReference type="Proteomes" id="UP000007011">
    <property type="component" value="Chromosome"/>
</dbReference>
<dbReference type="GO" id="GO:0005829">
    <property type="term" value="C:cytosol"/>
    <property type="evidence" value="ECO:0007669"/>
    <property type="project" value="TreeGrafter"/>
</dbReference>
<dbReference type="GO" id="GO:0000166">
    <property type="term" value="F:nucleotide binding"/>
    <property type="evidence" value="ECO:0007669"/>
    <property type="project" value="TreeGrafter"/>
</dbReference>
<dbReference type="CDD" id="cd11740">
    <property type="entry name" value="YajQ_like"/>
    <property type="match status" value="1"/>
</dbReference>
<dbReference type="FunFam" id="3.30.70.860:FF:000001">
    <property type="entry name" value="UPF0234 protein YajQ"/>
    <property type="match status" value="1"/>
</dbReference>
<dbReference type="FunFam" id="3.30.70.990:FF:000001">
    <property type="entry name" value="UPF0234 protein YajQ"/>
    <property type="match status" value="1"/>
</dbReference>
<dbReference type="Gene3D" id="3.30.70.860">
    <property type="match status" value="1"/>
</dbReference>
<dbReference type="Gene3D" id="3.30.70.990">
    <property type="entry name" value="YajQ-like, domain 2"/>
    <property type="match status" value="1"/>
</dbReference>
<dbReference type="HAMAP" id="MF_00632">
    <property type="entry name" value="YajQ"/>
    <property type="match status" value="1"/>
</dbReference>
<dbReference type="InterPro" id="IPR007551">
    <property type="entry name" value="DUF520"/>
</dbReference>
<dbReference type="InterPro" id="IPR035571">
    <property type="entry name" value="UPF0234-like_C"/>
</dbReference>
<dbReference type="InterPro" id="IPR035570">
    <property type="entry name" value="UPF0234_N"/>
</dbReference>
<dbReference type="InterPro" id="IPR036183">
    <property type="entry name" value="YajQ-like_sf"/>
</dbReference>
<dbReference type="NCBIfam" id="NF003819">
    <property type="entry name" value="PRK05412.1"/>
    <property type="match status" value="1"/>
</dbReference>
<dbReference type="PANTHER" id="PTHR30476">
    <property type="entry name" value="UPF0234 PROTEIN YAJQ"/>
    <property type="match status" value="1"/>
</dbReference>
<dbReference type="PANTHER" id="PTHR30476:SF0">
    <property type="entry name" value="UPF0234 PROTEIN YAJQ"/>
    <property type="match status" value="1"/>
</dbReference>
<dbReference type="Pfam" id="PF04461">
    <property type="entry name" value="DUF520"/>
    <property type="match status" value="1"/>
</dbReference>
<dbReference type="SUPFAM" id="SSF89963">
    <property type="entry name" value="YajQ-like"/>
    <property type="match status" value="2"/>
</dbReference>
<feature type="chain" id="PRO_1000130624" description="Nucleotide-binding protein YajQ">
    <location>
        <begin position="1"/>
        <end position="163"/>
    </location>
</feature>
<proteinExistence type="inferred from homology"/>
<name>YAJQ_ECOSM</name>
<gene>
    <name evidence="1" type="primary">yajQ</name>
    <name type="ordered locus">EcSMS35_0462</name>
</gene>
<evidence type="ECO:0000255" key="1">
    <source>
        <dbReference type="HAMAP-Rule" id="MF_00632"/>
    </source>
</evidence>
<organism>
    <name type="scientific">Escherichia coli (strain SMS-3-5 / SECEC)</name>
    <dbReference type="NCBI Taxonomy" id="439855"/>
    <lineage>
        <taxon>Bacteria</taxon>
        <taxon>Pseudomonadati</taxon>
        <taxon>Pseudomonadota</taxon>
        <taxon>Gammaproteobacteria</taxon>
        <taxon>Enterobacterales</taxon>
        <taxon>Enterobacteriaceae</taxon>
        <taxon>Escherichia</taxon>
    </lineage>
</organism>
<sequence>MPSFDIVSEVDLQEARNAVDNASREVESRFDFRNVEASFELNDASKTIKVLSESDFQVNQLLDILRAKLLKRGIEGSSLDVPENIVHSGKTWFVEAKLKQGIESATQKKIVKMIKDSKLKVQAQIQGDEIRVTGKSRDDLQAVMAMVRGGDLGQPFQFKNFRD</sequence>
<protein>
    <recommendedName>
        <fullName evidence="1">Nucleotide-binding protein YajQ</fullName>
    </recommendedName>
</protein>
<reference key="1">
    <citation type="journal article" date="2008" name="J. Bacteriol.">
        <title>Insights into the environmental resistance gene pool from the genome sequence of the multidrug-resistant environmental isolate Escherichia coli SMS-3-5.</title>
        <authorList>
            <person name="Fricke W.F."/>
            <person name="Wright M.S."/>
            <person name="Lindell A.H."/>
            <person name="Harkins D.M."/>
            <person name="Baker-Austin C."/>
            <person name="Ravel J."/>
            <person name="Stepanauskas R."/>
        </authorList>
    </citation>
    <scope>NUCLEOTIDE SEQUENCE [LARGE SCALE GENOMIC DNA]</scope>
    <source>
        <strain>SMS-3-5 / SECEC</strain>
    </source>
</reference>
<comment type="function">
    <text evidence="1">Nucleotide-binding protein.</text>
</comment>
<comment type="similarity">
    <text evidence="1">Belongs to the YajQ family.</text>
</comment>
<keyword id="KW-0547">Nucleotide-binding</keyword>